<protein>
    <recommendedName>
        <fullName>25 kDa outer-membrane immunogenic protein</fullName>
    </recommendedName>
</protein>
<evidence type="ECO:0000255" key="1"/>
<evidence type="ECO:0000305" key="2"/>
<comment type="subcellular location">
    <subcellularLocation>
        <location>Cell outer membrane</location>
    </subcellularLocation>
</comment>
<comment type="similarity">
    <text evidence="2">Belongs to the Omp25/RopB family.</text>
</comment>
<feature type="signal peptide" evidence="1">
    <location>
        <begin position="1"/>
        <end position="23"/>
    </location>
</feature>
<feature type="chain" id="PRO_0000021880" description="25 kDa outer-membrane immunogenic protein">
    <location>
        <begin position="24"/>
        <end position="213"/>
    </location>
</feature>
<name>OM25_BRUME</name>
<keyword id="KW-0998">Cell outer membrane</keyword>
<keyword id="KW-0472">Membrane</keyword>
<keyword id="KW-0732">Signal</keyword>
<keyword id="KW-0812">Transmembrane</keyword>
<keyword id="KW-1134">Transmembrane beta strand</keyword>
<accession>Q45321</accession>
<sequence>MRTLKSLVIVSAALLPFSATAFAADAIQEQPPVPAPVEVAPQYSWAGGYTGLYLGYGWNKAKTSTVGSIKPDDWKAGAFAGWNFQQDQIVYGVEGDAGYSWAKKSKDGLEVKQGFEGSLRARVGYDLNPVMPYLTAGIAGSQIKLNNGLDDESKFRVGWTAGAGLEAKLTDNILGRVEYRYTQYGNKNYDLAGTTVRNKLDTQDFRVGIGYKF</sequence>
<proteinExistence type="inferred from homology"/>
<reference key="1">
    <citation type="journal article" date="1996" name="Infect. Immun.">
        <title>Nucleotide sequence and expression of the gene encoding the major 25-kilodalton outer membrane protein of Brucella ovis: evidence for antigenic shift, compared with other Brucella species, due to a deletion in the gene.</title>
        <authorList>
            <person name="Cloeckaert A."/>
            <person name="Verger J.M."/>
            <person name="Grayon M."/>
            <person name="Zygmunt M.S."/>
            <person name="Grepinet O."/>
        </authorList>
    </citation>
    <scope>NUCLEOTIDE SEQUENCE [GENOMIC DNA]</scope>
    <source>
        <strain>ATCC 23456 / CCUG 17765 / NCTC 10094 / 16M</strain>
    </source>
</reference>
<reference key="2">
    <citation type="journal article" date="2002" name="Proc. Natl. Acad. Sci. U.S.A.">
        <title>The genome sequence of the facultative intracellular pathogen Brucella melitensis.</title>
        <authorList>
            <person name="DelVecchio V.G."/>
            <person name="Kapatral V."/>
            <person name="Redkar R.J."/>
            <person name="Patra G."/>
            <person name="Mujer C."/>
            <person name="Los T."/>
            <person name="Ivanova N."/>
            <person name="Anderson I."/>
            <person name="Bhattacharyya A."/>
            <person name="Lykidis A."/>
            <person name="Reznik G."/>
            <person name="Jablonski L."/>
            <person name="Larsen N."/>
            <person name="D'Souza M."/>
            <person name="Bernal A."/>
            <person name="Mazur M."/>
            <person name="Goltsman E."/>
            <person name="Selkov E."/>
            <person name="Elzer P.H."/>
            <person name="Hagius S."/>
            <person name="O'Callaghan D."/>
            <person name="Letesson J.-J."/>
            <person name="Haselkorn R."/>
            <person name="Kyrpides N.C."/>
            <person name="Overbeek R."/>
        </authorList>
    </citation>
    <scope>NUCLEOTIDE SEQUENCE [LARGE SCALE GENOMIC DNA]</scope>
    <source>
        <strain>ATCC 23456 / CCUG 17765 / NCTC 10094 / 16M</strain>
    </source>
</reference>
<organism>
    <name type="scientific">Brucella melitensis biotype 1 (strain ATCC 23456 / CCUG 17765 / NCTC 10094 / 16M)</name>
    <dbReference type="NCBI Taxonomy" id="224914"/>
    <lineage>
        <taxon>Bacteria</taxon>
        <taxon>Pseudomonadati</taxon>
        <taxon>Pseudomonadota</taxon>
        <taxon>Alphaproteobacteria</taxon>
        <taxon>Hyphomicrobiales</taxon>
        <taxon>Brucellaceae</taxon>
        <taxon>Brucella/Ochrobactrum group</taxon>
        <taxon>Brucella</taxon>
    </lineage>
</organism>
<dbReference type="EMBL" id="U33003">
    <property type="protein sequence ID" value="AAB06701.1"/>
    <property type="molecule type" value="Genomic_DNA"/>
</dbReference>
<dbReference type="EMBL" id="AE008917">
    <property type="protein sequence ID" value="AAL52430.1"/>
    <property type="molecule type" value="Genomic_DNA"/>
</dbReference>
<dbReference type="PIR" id="AC3408">
    <property type="entry name" value="AC3408"/>
</dbReference>
<dbReference type="RefSeq" id="WP_004683466.1">
    <property type="nucleotide sequence ID" value="NZ_GG703778.1"/>
</dbReference>
<dbReference type="SMR" id="Q45321"/>
<dbReference type="GeneID" id="29594100"/>
<dbReference type="KEGG" id="bme:BMEI1249"/>
<dbReference type="KEGG" id="bmel:DK63_156"/>
<dbReference type="PATRIC" id="fig|224914.52.peg.164"/>
<dbReference type="eggNOG" id="COG3637">
    <property type="taxonomic scope" value="Bacteria"/>
</dbReference>
<dbReference type="PhylomeDB" id="Q45321"/>
<dbReference type="Proteomes" id="UP000000419">
    <property type="component" value="Chromosome I"/>
</dbReference>
<dbReference type="GO" id="GO:0009279">
    <property type="term" value="C:cell outer membrane"/>
    <property type="evidence" value="ECO:0007669"/>
    <property type="project" value="UniProtKB-SubCell"/>
</dbReference>
<dbReference type="GO" id="GO:0044384">
    <property type="term" value="C:host outer membrane"/>
    <property type="evidence" value="ECO:0007669"/>
    <property type="project" value="InterPro"/>
</dbReference>
<dbReference type="Gene3D" id="2.40.160.20">
    <property type="match status" value="1"/>
</dbReference>
<dbReference type="InterPro" id="IPR000758">
    <property type="entry name" value="Enterovir_OMP"/>
</dbReference>
<dbReference type="InterPro" id="IPR051692">
    <property type="entry name" value="OMP-like"/>
</dbReference>
<dbReference type="InterPro" id="IPR011250">
    <property type="entry name" value="OMP/PagP_b-brl"/>
</dbReference>
<dbReference type="InterPro" id="IPR027385">
    <property type="entry name" value="OMP_b-brl"/>
</dbReference>
<dbReference type="PANTHER" id="PTHR34001">
    <property type="entry name" value="BLL7405 PROTEIN"/>
    <property type="match status" value="1"/>
</dbReference>
<dbReference type="PANTHER" id="PTHR34001:SF3">
    <property type="entry name" value="BLL7405 PROTEIN"/>
    <property type="match status" value="1"/>
</dbReference>
<dbReference type="Pfam" id="PF13505">
    <property type="entry name" value="OMP_b-brl"/>
    <property type="match status" value="1"/>
</dbReference>
<dbReference type="SUPFAM" id="SSF56925">
    <property type="entry name" value="OMPA-like"/>
    <property type="match status" value="1"/>
</dbReference>
<gene>
    <name type="primary">omp25</name>
    <name type="ordered locus">BMEI1249</name>
</gene>